<proteinExistence type="inferred from homology"/>
<feature type="chain" id="PRO_0000416228" description="Psi-producing oxygenase A">
    <location>
        <begin position="1"/>
        <end position="1079"/>
    </location>
</feature>
<feature type="region of interest" description="Linoleate 8R-lipoxygenase" evidence="1">
    <location>
        <begin position="105"/>
        <end position="446"/>
    </location>
</feature>
<feature type="region of interest" description="9,12-octadecadienoate 8-hydroperoxide 8R-isomerase" evidence="1">
    <location>
        <begin position="654"/>
        <end position="1079"/>
    </location>
</feature>
<feature type="active site" evidence="2">
    <location>
        <position position="374"/>
    </location>
</feature>
<feature type="binding site" description="axial binding residue" evidence="3">
    <location>
        <position position="202"/>
    </location>
    <ligand>
        <name>heme b</name>
        <dbReference type="ChEBI" id="CHEBI:60344"/>
    </ligand>
    <ligandPart>
        <name>Fe</name>
        <dbReference type="ChEBI" id="CHEBI:18248"/>
    </ligandPart>
</feature>
<feature type="binding site" description="axial binding residue" evidence="3">
    <location>
        <position position="377"/>
    </location>
    <ligand>
        <name>heme b</name>
        <dbReference type="ChEBI" id="CHEBI:60344"/>
    </ligand>
    <ligandPart>
        <name>Fe</name>
        <dbReference type="ChEBI" id="CHEBI:18248"/>
    </ligandPart>
</feature>
<name>PPOA_ASPFC</name>
<dbReference type="EC" id="1.13.11.60"/>
<dbReference type="EC" id="5.4.4.5"/>
<dbReference type="EMBL" id="DS499598">
    <property type="protein sequence ID" value="EDP50447.1"/>
    <property type="molecule type" value="Genomic_DNA"/>
</dbReference>
<dbReference type="SMR" id="B0Y6R2"/>
<dbReference type="EnsemblFungi" id="EDP50447">
    <property type="protein sequence ID" value="EDP50447"/>
    <property type="gene ID" value="AFUB_067850"/>
</dbReference>
<dbReference type="VEuPathDB" id="FungiDB:AFUB_067850"/>
<dbReference type="HOGENOM" id="CLU_002329_1_0_1"/>
<dbReference type="OrthoDB" id="25218at5052"/>
<dbReference type="PhylomeDB" id="B0Y6R2"/>
<dbReference type="Proteomes" id="UP000001699">
    <property type="component" value="Unassembled WGS sequence"/>
</dbReference>
<dbReference type="GO" id="GO:0020037">
    <property type="term" value="F:heme binding"/>
    <property type="evidence" value="ECO:0007669"/>
    <property type="project" value="InterPro"/>
</dbReference>
<dbReference type="GO" id="GO:0005506">
    <property type="term" value="F:iron ion binding"/>
    <property type="evidence" value="ECO:0007669"/>
    <property type="project" value="InterPro"/>
</dbReference>
<dbReference type="GO" id="GO:0016853">
    <property type="term" value="F:isomerase activity"/>
    <property type="evidence" value="ECO:0007669"/>
    <property type="project" value="UniProtKB-KW"/>
</dbReference>
<dbReference type="GO" id="GO:0052878">
    <property type="term" value="F:linoleate 8R-lipoxygenase activity"/>
    <property type="evidence" value="ECO:0007669"/>
    <property type="project" value="UniProtKB-EC"/>
</dbReference>
<dbReference type="GO" id="GO:0004497">
    <property type="term" value="F:monooxygenase activity"/>
    <property type="evidence" value="ECO:0007669"/>
    <property type="project" value="InterPro"/>
</dbReference>
<dbReference type="GO" id="GO:0016705">
    <property type="term" value="F:oxidoreductase activity, acting on paired donors, with incorporation or reduction of molecular oxygen"/>
    <property type="evidence" value="ECO:0007669"/>
    <property type="project" value="InterPro"/>
</dbReference>
<dbReference type="GO" id="GO:0004601">
    <property type="term" value="F:peroxidase activity"/>
    <property type="evidence" value="ECO:0007669"/>
    <property type="project" value="UniProtKB-KW"/>
</dbReference>
<dbReference type="GO" id="GO:0009058">
    <property type="term" value="P:biosynthetic process"/>
    <property type="evidence" value="ECO:0007669"/>
    <property type="project" value="UniProtKB-ARBA"/>
</dbReference>
<dbReference type="GO" id="GO:0006631">
    <property type="term" value="P:fatty acid metabolic process"/>
    <property type="evidence" value="ECO:0007669"/>
    <property type="project" value="UniProtKB-ARBA"/>
</dbReference>
<dbReference type="GO" id="GO:0006979">
    <property type="term" value="P:response to oxidative stress"/>
    <property type="evidence" value="ECO:0007669"/>
    <property type="project" value="InterPro"/>
</dbReference>
<dbReference type="CDD" id="cd20612">
    <property type="entry name" value="CYP_LDS-like_C"/>
    <property type="match status" value="1"/>
</dbReference>
<dbReference type="CDD" id="cd09817">
    <property type="entry name" value="linoleate_diol_synthase_like"/>
    <property type="match status" value="1"/>
</dbReference>
<dbReference type="FunFam" id="1.10.630.10:FF:000058">
    <property type="entry name" value="Fatty acid oxygenase"/>
    <property type="match status" value="1"/>
</dbReference>
<dbReference type="FunFam" id="1.10.640.10:FF:000005">
    <property type="entry name" value="Fatty acid oxygenase"/>
    <property type="match status" value="1"/>
</dbReference>
<dbReference type="Gene3D" id="1.10.630.10">
    <property type="entry name" value="Cytochrome P450"/>
    <property type="match status" value="1"/>
</dbReference>
<dbReference type="Gene3D" id="1.10.640.10">
    <property type="entry name" value="Haem peroxidase domain superfamily, animal type"/>
    <property type="match status" value="1"/>
</dbReference>
<dbReference type="InterPro" id="IPR001128">
    <property type="entry name" value="Cyt_P450"/>
</dbReference>
<dbReference type="InterPro" id="IPR017972">
    <property type="entry name" value="Cyt_P450_CS"/>
</dbReference>
<dbReference type="InterPro" id="IPR036396">
    <property type="entry name" value="Cyt_P450_sf"/>
</dbReference>
<dbReference type="InterPro" id="IPR019791">
    <property type="entry name" value="Haem_peroxidase_animal"/>
</dbReference>
<dbReference type="InterPro" id="IPR010255">
    <property type="entry name" value="Haem_peroxidase_sf"/>
</dbReference>
<dbReference type="InterPro" id="IPR037120">
    <property type="entry name" value="Haem_peroxidase_sf_animal"/>
</dbReference>
<dbReference type="InterPro" id="IPR050783">
    <property type="entry name" value="Oxylipin_biosynth_metab"/>
</dbReference>
<dbReference type="InterPro" id="IPR034812">
    <property type="entry name" value="Ppo-like_N"/>
</dbReference>
<dbReference type="PANTHER" id="PTHR11903">
    <property type="entry name" value="PROSTAGLANDIN G/H SYNTHASE"/>
    <property type="match status" value="1"/>
</dbReference>
<dbReference type="PANTHER" id="PTHR11903:SF37">
    <property type="entry name" value="PSI-PRODUCING OXYGENASE A"/>
    <property type="match status" value="1"/>
</dbReference>
<dbReference type="Pfam" id="PF03098">
    <property type="entry name" value="An_peroxidase"/>
    <property type="match status" value="2"/>
</dbReference>
<dbReference type="Pfam" id="PF00067">
    <property type="entry name" value="p450"/>
    <property type="match status" value="1"/>
</dbReference>
<dbReference type="SUPFAM" id="SSF48264">
    <property type="entry name" value="Cytochrome P450"/>
    <property type="match status" value="1"/>
</dbReference>
<dbReference type="SUPFAM" id="SSF48113">
    <property type="entry name" value="Heme-dependent peroxidases"/>
    <property type="match status" value="1"/>
</dbReference>
<dbReference type="PROSITE" id="PS00086">
    <property type="entry name" value="CYTOCHROME_P450"/>
    <property type="match status" value="1"/>
</dbReference>
<dbReference type="PROSITE" id="PS50292">
    <property type="entry name" value="PEROXIDASE_3"/>
    <property type="match status" value="1"/>
</dbReference>
<protein>
    <recommendedName>
        <fullName>Psi-producing oxygenase A</fullName>
    </recommendedName>
    <alternativeName>
        <fullName>Fatty acid oxygenase ppoA</fullName>
    </alternativeName>
    <domain>
        <recommendedName>
            <fullName>Linoleate 8R-lipoxygenase</fullName>
            <ecNumber>1.13.11.60</ecNumber>
        </recommendedName>
    </domain>
    <domain>
        <recommendedName>
            <fullName>9,12-octadecadienoate 8-hydroperoxide 8R-isomerase</fullName>
            <ecNumber>5.4.4.5</ecNumber>
        </recommendedName>
    </domain>
</protein>
<organism>
    <name type="scientific">Aspergillus fumigatus (strain CBS 144.89 / FGSC A1163 / CEA10)</name>
    <name type="common">Neosartorya fumigata</name>
    <dbReference type="NCBI Taxonomy" id="451804"/>
    <lineage>
        <taxon>Eukaryota</taxon>
        <taxon>Fungi</taxon>
        <taxon>Dikarya</taxon>
        <taxon>Ascomycota</taxon>
        <taxon>Pezizomycotina</taxon>
        <taxon>Eurotiomycetes</taxon>
        <taxon>Eurotiomycetidae</taxon>
        <taxon>Eurotiales</taxon>
        <taxon>Aspergillaceae</taxon>
        <taxon>Aspergillus</taxon>
        <taxon>Aspergillus subgen. Fumigati</taxon>
    </lineage>
</organism>
<comment type="function">
    <text evidence="1">Bifunctional heme-containing enzyme that oxidizes linoleic acid to (8R,9Z,12Z)-8-hydroperoxyoctadeca-9,12-dienoate (within the N-terminal heme peroxidase domain), which is subsequently isomerized to (5S,8R,9Z,12Z)-5,8-dihydroxyoctadeca-9,12-dienoate (within the C-terminal P450 heme thiolate domain). Oxidized unsaturated fatty acids, so-called oxylipins, derived from endogenous fatty acids, influence the development of the asexual conidiophores and sexual cleistothecia and regulate the secondary metabolism. These substances were collectively named psi factors and are primarily a mixture of hydroxylated oleic, linoleic and alpha-linolenic acids. They are termed psi-beta, psi-alpha, and psi-gamma, respectively. Oxylipins may also serve as activators of mammalian immune responses contributing to enhanced resistance to opportunistic fungi and as factors that modulate fungal development contributing to resistance to host defenses (By similarity).</text>
</comment>
<comment type="catalytic activity">
    <reaction>
        <text>(9Z,12Z)-octadecadienoate + O2 = (8R,9Z,12Z)-8-hydroperoxyoctadeca-9,12-dienoate</text>
        <dbReference type="Rhea" id="RHEA:25395"/>
        <dbReference type="ChEBI" id="CHEBI:15379"/>
        <dbReference type="ChEBI" id="CHEBI:30245"/>
        <dbReference type="ChEBI" id="CHEBI:58659"/>
        <dbReference type="EC" id="1.13.11.60"/>
    </reaction>
</comment>
<comment type="catalytic activity">
    <reaction>
        <text>(8R,9Z,12Z)-8-hydroperoxyoctadeca-9,12-dienoate = (5S,8R,9Z,12Z)-5,8-dihydroxyoctadeca-9,12-dienoate</text>
        <dbReference type="Rhea" id="RHEA:31579"/>
        <dbReference type="ChEBI" id="CHEBI:58659"/>
        <dbReference type="ChEBI" id="CHEBI:63217"/>
        <dbReference type="EC" id="5.4.4.5"/>
    </reaction>
</comment>
<comment type="cofactor">
    <cofactor evidence="1">
        <name>heme b</name>
        <dbReference type="ChEBI" id="CHEBI:60344"/>
    </cofactor>
</comment>
<comment type="subunit">
    <text evidence="1">Homotetramer.</text>
</comment>
<comment type="similarity">
    <text evidence="3">Belongs to the peroxidase family.</text>
</comment>
<reference key="1">
    <citation type="journal article" date="2008" name="PLoS Genet.">
        <title>Genomic islands in the pathogenic filamentous fungus Aspergillus fumigatus.</title>
        <authorList>
            <person name="Fedorova N.D."/>
            <person name="Khaldi N."/>
            <person name="Joardar V.S."/>
            <person name="Maiti R."/>
            <person name="Amedeo P."/>
            <person name="Anderson M.J."/>
            <person name="Crabtree J."/>
            <person name="Silva J.C."/>
            <person name="Badger J.H."/>
            <person name="Albarraq A."/>
            <person name="Angiuoli S."/>
            <person name="Bussey H."/>
            <person name="Bowyer P."/>
            <person name="Cotty P.J."/>
            <person name="Dyer P.S."/>
            <person name="Egan A."/>
            <person name="Galens K."/>
            <person name="Fraser-Liggett C.M."/>
            <person name="Haas B.J."/>
            <person name="Inman J.M."/>
            <person name="Kent R."/>
            <person name="Lemieux S."/>
            <person name="Malavazi I."/>
            <person name="Orvis J."/>
            <person name="Roemer T."/>
            <person name="Ronning C.M."/>
            <person name="Sundaram J.P."/>
            <person name="Sutton G."/>
            <person name="Turner G."/>
            <person name="Venter J.C."/>
            <person name="White O.R."/>
            <person name="Whitty B.R."/>
            <person name="Youngman P."/>
            <person name="Wolfe K.H."/>
            <person name="Goldman G.H."/>
            <person name="Wortman J.R."/>
            <person name="Jiang B."/>
            <person name="Denning D.W."/>
            <person name="Nierman W.C."/>
        </authorList>
    </citation>
    <scope>NUCLEOTIDE SEQUENCE [LARGE SCALE GENOMIC DNA]</scope>
    <source>
        <strain>CBS 144.89 / FGSC A1163 / CEA10</strain>
    </source>
</reference>
<sequence length="1079" mass="121192">MSEKQTGSANGGLGKTLAQLEQVVSASLRPLPSQTGDGTYVTEQVKTGILKDLSHVDLGDLKTLVDVSKSALTGEALDDRKYIMERVIQLSAGLPSTSQIGKELTNTFLTTLWNDLEHPPISYLGRDAMYRRADGSGNNVLWPHIGAAGTPYARSVQPKTVQSPNLPDPETLFDCLLARKEYKEHPNKISSVLFYIASIIIHDLFETDRKDPAISLTSSYLDLSPLYGNNQQEQDLIRTFKDGKLKPDCFSTKRVLGFPPGVGVVLIMFNRFHNYVVEKLAMINEGGRFTKPQESDTAAYAKYDNDLFQTGRLVTCGLYVNIILKDYVRTILNINRTDSIWSLDPRSEMKDGLLGRAAAQATGNQVAAEFNLVYRWHSCISQRDQKWTEDMYQELFPGQDPSKISLQDFLRGLGRWEAKLPGEPRERPFAGLQRKADGSYDDNDLVKIFEESVEDCAGAFGALHVPTVFRSIEALGIQQARSWNLATLNEFRKYFNLAPYKTFEEINSDPYVADQLKRLYDHPDRVEIYPGIIVEDAKESMAPGSGLCTNFTISRAILSDAVALVRGDRFHTVDFTPKHLTNWAYNEIQPQDSVDQTHVFYKLVLRAFPNHFRGDSIYAHFPLVVPSENKKILTKLGTADKYSWDRPNYTPPPQFINSHSACMSILSDQETFKVTWGSKIEFLMRHNNQPYGRDFMLSGDRTPNAMSRQMMGKALYRDKWETEVKRFYENITLKLLHRYSYKLAGVNQVDVVRDIANLAQVHFCASVFSLPLKTESNPRGIFTESELYQIMAVVFTSIFYDADIGKSFELNQAARAVTQQLGQLTLANVELIAKTGFIANLVNSLHRHDVLSEYGVHMIQRLLDSGMPAPEIVWTHVLPTAGGMVANQAQLFSQSLDYYLSEEGSVHLPEINRLAKEDTTEADDLLLRYFMEGARIRSSVALPRVVAQPTVVEDNGQKITLKQGQHIICNLVSASMDPVTFPEPDKVKLDRDMNLYAHFGFGPHQCLGLGLCKTALTTMLKVIGRLDNLRRAPGGQGKLKKLSGPGGIAMYMTPDQTAFFPFPTTMKIQWDGDLPEVKE</sequence>
<accession>B0Y6R2</accession>
<evidence type="ECO:0000250" key="1"/>
<evidence type="ECO:0000255" key="2"/>
<evidence type="ECO:0000255" key="3">
    <source>
        <dbReference type="PROSITE-ProRule" id="PRU00298"/>
    </source>
</evidence>
<gene>
    <name type="primary">ppoA</name>
    <name type="ORF">AFUB_067850</name>
</gene>
<keyword id="KW-0223">Dioxygenase</keyword>
<keyword id="KW-0349">Heme</keyword>
<keyword id="KW-0408">Iron</keyword>
<keyword id="KW-0413">Isomerase</keyword>
<keyword id="KW-0479">Metal-binding</keyword>
<keyword id="KW-0511">Multifunctional enzyme</keyword>
<keyword id="KW-0560">Oxidoreductase</keyword>
<keyword id="KW-0575">Peroxidase</keyword>
<keyword id="KW-0843">Virulence</keyword>